<dbReference type="EC" id="1.3.1.-" evidence="1"/>
<dbReference type="EC" id="1.3.1.91" evidence="1"/>
<dbReference type="EMBL" id="AL513382">
    <property type="protein sequence ID" value="CAD09227.1"/>
    <property type="molecule type" value="Genomic_DNA"/>
</dbReference>
<dbReference type="EMBL" id="AE014613">
    <property type="protein sequence ID" value="AAO71613.1"/>
    <property type="molecule type" value="Genomic_DNA"/>
</dbReference>
<dbReference type="RefSeq" id="NP_458541.1">
    <property type="nucleotide sequence ID" value="NC_003198.1"/>
</dbReference>
<dbReference type="RefSeq" id="WP_001182236.1">
    <property type="nucleotide sequence ID" value="NZ_WSUR01000027.1"/>
</dbReference>
<dbReference type="SMR" id="Q8Z1T1"/>
<dbReference type="STRING" id="220341.gene:17588271"/>
<dbReference type="KEGG" id="stt:t4149"/>
<dbReference type="KEGG" id="sty:STY4439"/>
<dbReference type="PATRIC" id="fig|220341.7.peg.4539"/>
<dbReference type="eggNOG" id="COG0042">
    <property type="taxonomic scope" value="Bacteria"/>
</dbReference>
<dbReference type="HOGENOM" id="CLU_013299_2_1_6"/>
<dbReference type="OMA" id="NNMIGAC"/>
<dbReference type="OrthoDB" id="9783413at2"/>
<dbReference type="Proteomes" id="UP000000541">
    <property type="component" value="Chromosome"/>
</dbReference>
<dbReference type="Proteomes" id="UP000002670">
    <property type="component" value="Chromosome"/>
</dbReference>
<dbReference type="GO" id="GO:0050660">
    <property type="term" value="F:flavin adenine dinucleotide binding"/>
    <property type="evidence" value="ECO:0007669"/>
    <property type="project" value="InterPro"/>
</dbReference>
<dbReference type="GO" id="GO:0010181">
    <property type="term" value="F:FMN binding"/>
    <property type="evidence" value="ECO:0007669"/>
    <property type="project" value="UniProtKB-UniRule"/>
</dbReference>
<dbReference type="GO" id="GO:0000049">
    <property type="term" value="F:tRNA binding"/>
    <property type="evidence" value="ECO:0007669"/>
    <property type="project" value="UniProtKB-UniRule"/>
</dbReference>
<dbReference type="GO" id="GO:0102264">
    <property type="term" value="F:tRNA-dihydrouridine20 synthase activity"/>
    <property type="evidence" value="ECO:0007669"/>
    <property type="project" value="UniProtKB-EC"/>
</dbReference>
<dbReference type="GO" id="GO:0102266">
    <property type="term" value="F:tRNA-dihydrouridine20a synthase activity"/>
    <property type="evidence" value="ECO:0007669"/>
    <property type="project" value="RHEA"/>
</dbReference>
<dbReference type="CDD" id="cd02801">
    <property type="entry name" value="DUS_like_FMN"/>
    <property type="match status" value="1"/>
</dbReference>
<dbReference type="FunFam" id="1.20.120.1460:FF:000001">
    <property type="entry name" value="tRNA-dihydrouridine(20/20a) synthase"/>
    <property type="match status" value="1"/>
</dbReference>
<dbReference type="FunFam" id="3.20.20.70:FF:000083">
    <property type="entry name" value="tRNA-dihydrouridine(20/20a) synthase"/>
    <property type="match status" value="1"/>
</dbReference>
<dbReference type="Gene3D" id="1.20.120.1460">
    <property type="match status" value="1"/>
</dbReference>
<dbReference type="Gene3D" id="3.20.20.70">
    <property type="entry name" value="Aldolase class I"/>
    <property type="match status" value="1"/>
</dbReference>
<dbReference type="HAMAP" id="MF_02041">
    <property type="entry name" value="DusA_subfam"/>
    <property type="match status" value="1"/>
</dbReference>
<dbReference type="InterPro" id="IPR013785">
    <property type="entry name" value="Aldolase_TIM"/>
</dbReference>
<dbReference type="InterPro" id="IPR035587">
    <property type="entry name" value="DUS-like_FMN-bd"/>
</dbReference>
<dbReference type="InterPro" id="IPR001269">
    <property type="entry name" value="DUS_fam"/>
</dbReference>
<dbReference type="InterPro" id="IPR004653">
    <property type="entry name" value="DusA"/>
</dbReference>
<dbReference type="InterPro" id="IPR018517">
    <property type="entry name" value="tRNA_hU_synthase_CS"/>
</dbReference>
<dbReference type="NCBIfam" id="NF008774">
    <property type="entry name" value="PRK11815.1"/>
    <property type="match status" value="1"/>
</dbReference>
<dbReference type="NCBIfam" id="TIGR00742">
    <property type="entry name" value="yjbN"/>
    <property type="match status" value="1"/>
</dbReference>
<dbReference type="PANTHER" id="PTHR42907">
    <property type="entry name" value="FMN-LINKED OXIDOREDUCTASES SUPERFAMILY PROTEIN"/>
    <property type="match status" value="1"/>
</dbReference>
<dbReference type="PANTHER" id="PTHR42907:SF1">
    <property type="entry name" value="FMN-LINKED OXIDOREDUCTASES SUPERFAMILY PROTEIN"/>
    <property type="match status" value="1"/>
</dbReference>
<dbReference type="Pfam" id="PF01207">
    <property type="entry name" value="Dus"/>
    <property type="match status" value="1"/>
</dbReference>
<dbReference type="PIRSF" id="PIRSF006621">
    <property type="entry name" value="Dus"/>
    <property type="match status" value="1"/>
</dbReference>
<dbReference type="SUPFAM" id="SSF51395">
    <property type="entry name" value="FMN-linked oxidoreductases"/>
    <property type="match status" value="1"/>
</dbReference>
<dbReference type="PROSITE" id="PS01136">
    <property type="entry name" value="UPF0034"/>
    <property type="match status" value="1"/>
</dbReference>
<keyword id="KW-0285">Flavoprotein</keyword>
<keyword id="KW-0288">FMN</keyword>
<keyword id="KW-0521">NADP</keyword>
<keyword id="KW-0560">Oxidoreductase</keyword>
<keyword id="KW-0694">RNA-binding</keyword>
<keyword id="KW-0819">tRNA processing</keyword>
<keyword id="KW-0820">tRNA-binding</keyword>
<accession>Q8Z1T1</accession>
<evidence type="ECO:0000255" key="1">
    <source>
        <dbReference type="HAMAP-Rule" id="MF_02041"/>
    </source>
</evidence>
<comment type="function">
    <text evidence="1">Catalyzes the synthesis of 5,6-dihydrouridine (D), a modified base found in the D-loop of most tRNAs, via the reduction of the C5-C6 double bond in target uridines. Specifically modifies U20 and U20a in tRNAs.</text>
</comment>
<comment type="catalytic activity">
    <reaction evidence="1">
        <text>5,6-dihydrouridine(20) in tRNA + NADP(+) = uridine(20) in tRNA + NADPH + H(+)</text>
        <dbReference type="Rhea" id="RHEA:53336"/>
        <dbReference type="Rhea" id="RHEA-COMP:13533"/>
        <dbReference type="Rhea" id="RHEA-COMP:13534"/>
        <dbReference type="ChEBI" id="CHEBI:15378"/>
        <dbReference type="ChEBI" id="CHEBI:57783"/>
        <dbReference type="ChEBI" id="CHEBI:58349"/>
        <dbReference type="ChEBI" id="CHEBI:65315"/>
        <dbReference type="ChEBI" id="CHEBI:74443"/>
        <dbReference type="EC" id="1.3.1.91"/>
    </reaction>
</comment>
<comment type="catalytic activity">
    <reaction evidence="1">
        <text>5,6-dihydrouridine(20) in tRNA + NAD(+) = uridine(20) in tRNA + NADH + H(+)</text>
        <dbReference type="Rhea" id="RHEA:53340"/>
        <dbReference type="Rhea" id="RHEA-COMP:13533"/>
        <dbReference type="Rhea" id="RHEA-COMP:13534"/>
        <dbReference type="ChEBI" id="CHEBI:15378"/>
        <dbReference type="ChEBI" id="CHEBI:57540"/>
        <dbReference type="ChEBI" id="CHEBI:57945"/>
        <dbReference type="ChEBI" id="CHEBI:65315"/>
        <dbReference type="ChEBI" id="CHEBI:74443"/>
        <dbReference type="EC" id="1.3.1.91"/>
    </reaction>
</comment>
<comment type="catalytic activity">
    <reaction evidence="1">
        <text>5,6-dihydrouridine(20a) in tRNA + NADP(+) = uridine(20a) in tRNA + NADPH + H(+)</text>
        <dbReference type="Rhea" id="RHEA:53344"/>
        <dbReference type="Rhea" id="RHEA-COMP:13535"/>
        <dbReference type="Rhea" id="RHEA-COMP:13536"/>
        <dbReference type="ChEBI" id="CHEBI:15378"/>
        <dbReference type="ChEBI" id="CHEBI:57783"/>
        <dbReference type="ChEBI" id="CHEBI:58349"/>
        <dbReference type="ChEBI" id="CHEBI:65315"/>
        <dbReference type="ChEBI" id="CHEBI:74443"/>
    </reaction>
</comment>
<comment type="catalytic activity">
    <reaction evidence="1">
        <text>5,6-dihydrouridine(20a) in tRNA + NAD(+) = uridine(20a) in tRNA + NADH + H(+)</text>
        <dbReference type="Rhea" id="RHEA:53348"/>
        <dbReference type="Rhea" id="RHEA-COMP:13535"/>
        <dbReference type="Rhea" id="RHEA-COMP:13536"/>
        <dbReference type="ChEBI" id="CHEBI:15378"/>
        <dbReference type="ChEBI" id="CHEBI:57540"/>
        <dbReference type="ChEBI" id="CHEBI:57945"/>
        <dbReference type="ChEBI" id="CHEBI:65315"/>
        <dbReference type="ChEBI" id="CHEBI:74443"/>
    </reaction>
</comment>
<comment type="cofactor">
    <cofactor evidence="1">
        <name>FMN</name>
        <dbReference type="ChEBI" id="CHEBI:58210"/>
    </cofactor>
</comment>
<comment type="similarity">
    <text evidence="1">Belongs to the Dus family. DusA subfamily.</text>
</comment>
<sequence length="332" mass="36986">MQPETQSSALPAYRFSIAPMLDWTDRHCRYFLRLLSRQTLLYTEMVTTGAIIHGKGDYLAYSEEEHPVALQLGGSDPAQLAHCAKLAEARGYDEINLNVGCPSDRVQNGMFGACLMGNAQLVADCVKAMRDVVSIPVTVKTRIGIDDQDSYAFLCDFINTVSGQGECEMFIIHARKAWLSGLSPKENREIPPLDYPRVYQLKRDFPHLTMSINGGIKSLEEAKEHLRHMDGVMVGREAYQNPGILAAVDREIFGADTTDTDPVAVVRAMYPYIERELSQGAYLGHITRHMLGLFQGIPGARQWRRYLSENAHKAGADAAVLEQALKLIADKR</sequence>
<protein>
    <recommendedName>
        <fullName evidence="1">tRNA-dihydrouridine(20/20a) synthase</fullName>
        <ecNumber evidence="1">1.3.1.-</ecNumber>
        <ecNumber evidence="1">1.3.1.91</ecNumber>
    </recommendedName>
    <alternativeName>
        <fullName evidence="1">U20-specific dihydrouridine synthase</fullName>
        <shortName evidence="1">U20-specific Dus</shortName>
    </alternativeName>
    <alternativeName>
        <fullName evidence="1">tRNA-dihydrouridine synthase A</fullName>
    </alternativeName>
</protein>
<proteinExistence type="inferred from homology"/>
<name>DUSA_SALTI</name>
<feature type="chain" id="PRO_0000162072" description="tRNA-dihydrouridine(20/20a) synthase">
    <location>
        <begin position="1"/>
        <end position="332"/>
    </location>
</feature>
<feature type="active site" description="Proton donor" evidence="1">
    <location>
        <position position="101"/>
    </location>
</feature>
<feature type="binding site" evidence="1">
    <location>
        <begin position="19"/>
        <end position="21"/>
    </location>
    <ligand>
        <name>FMN</name>
        <dbReference type="ChEBI" id="CHEBI:58210"/>
    </ligand>
</feature>
<feature type="binding site" evidence="1">
    <location>
        <position position="71"/>
    </location>
    <ligand>
        <name>FMN</name>
        <dbReference type="ChEBI" id="CHEBI:58210"/>
    </ligand>
</feature>
<feature type="binding site" evidence="1">
    <location>
        <position position="140"/>
    </location>
    <ligand>
        <name>FMN</name>
        <dbReference type="ChEBI" id="CHEBI:58210"/>
    </ligand>
</feature>
<feature type="binding site" evidence="1">
    <location>
        <position position="173"/>
    </location>
    <ligand>
        <name>FMN</name>
        <dbReference type="ChEBI" id="CHEBI:58210"/>
    </ligand>
</feature>
<feature type="binding site" evidence="1">
    <location>
        <begin position="213"/>
        <end position="215"/>
    </location>
    <ligand>
        <name>FMN</name>
        <dbReference type="ChEBI" id="CHEBI:58210"/>
    </ligand>
</feature>
<feature type="binding site" evidence="1">
    <location>
        <begin position="235"/>
        <end position="236"/>
    </location>
    <ligand>
        <name>FMN</name>
        <dbReference type="ChEBI" id="CHEBI:58210"/>
    </ligand>
</feature>
<feature type="site" description="Interacts with tRNA" evidence="1">
    <location>
        <position position="98"/>
    </location>
</feature>
<feature type="site" description="Interacts with tRNA; defines subfamily-specific binding signature" evidence="1">
    <location>
        <position position="185"/>
    </location>
</feature>
<feature type="site" description="Interacts with tRNA" evidence="1">
    <location>
        <position position="188"/>
    </location>
</feature>
<feature type="site" description="Interacts with tRNA; defines subfamily-specific binding signature" evidence="1">
    <location>
        <position position="301"/>
    </location>
</feature>
<feature type="site" description="Interacts with tRNA; defines subfamily-specific binding signature" evidence="1">
    <location>
        <position position="304"/>
    </location>
</feature>
<gene>
    <name evidence="1" type="primary">dusA</name>
    <name type="ordered locus">STY4439</name>
    <name type="ordered locus">t4149</name>
</gene>
<organism>
    <name type="scientific">Salmonella typhi</name>
    <dbReference type="NCBI Taxonomy" id="90370"/>
    <lineage>
        <taxon>Bacteria</taxon>
        <taxon>Pseudomonadati</taxon>
        <taxon>Pseudomonadota</taxon>
        <taxon>Gammaproteobacteria</taxon>
        <taxon>Enterobacterales</taxon>
        <taxon>Enterobacteriaceae</taxon>
        <taxon>Salmonella</taxon>
    </lineage>
</organism>
<reference key="1">
    <citation type="journal article" date="2001" name="Nature">
        <title>Complete genome sequence of a multiple drug resistant Salmonella enterica serovar Typhi CT18.</title>
        <authorList>
            <person name="Parkhill J."/>
            <person name="Dougan G."/>
            <person name="James K.D."/>
            <person name="Thomson N.R."/>
            <person name="Pickard D."/>
            <person name="Wain J."/>
            <person name="Churcher C.M."/>
            <person name="Mungall K.L."/>
            <person name="Bentley S.D."/>
            <person name="Holden M.T.G."/>
            <person name="Sebaihia M."/>
            <person name="Baker S."/>
            <person name="Basham D."/>
            <person name="Brooks K."/>
            <person name="Chillingworth T."/>
            <person name="Connerton P."/>
            <person name="Cronin A."/>
            <person name="Davis P."/>
            <person name="Davies R.M."/>
            <person name="Dowd L."/>
            <person name="White N."/>
            <person name="Farrar J."/>
            <person name="Feltwell T."/>
            <person name="Hamlin N."/>
            <person name="Haque A."/>
            <person name="Hien T.T."/>
            <person name="Holroyd S."/>
            <person name="Jagels K."/>
            <person name="Krogh A."/>
            <person name="Larsen T.S."/>
            <person name="Leather S."/>
            <person name="Moule S."/>
            <person name="O'Gaora P."/>
            <person name="Parry C."/>
            <person name="Quail M.A."/>
            <person name="Rutherford K.M."/>
            <person name="Simmonds M."/>
            <person name="Skelton J."/>
            <person name="Stevens K."/>
            <person name="Whitehead S."/>
            <person name="Barrell B.G."/>
        </authorList>
    </citation>
    <scope>NUCLEOTIDE SEQUENCE [LARGE SCALE GENOMIC DNA]</scope>
    <source>
        <strain>CT18</strain>
    </source>
</reference>
<reference key="2">
    <citation type="journal article" date="2003" name="J. Bacteriol.">
        <title>Comparative genomics of Salmonella enterica serovar Typhi strains Ty2 and CT18.</title>
        <authorList>
            <person name="Deng W."/>
            <person name="Liou S.-R."/>
            <person name="Plunkett G. III"/>
            <person name="Mayhew G.F."/>
            <person name="Rose D.J."/>
            <person name="Burland V."/>
            <person name="Kodoyianni V."/>
            <person name="Schwartz D.C."/>
            <person name="Blattner F.R."/>
        </authorList>
    </citation>
    <scope>NUCLEOTIDE SEQUENCE [LARGE SCALE GENOMIC DNA]</scope>
    <source>
        <strain>ATCC 700931 / Ty2</strain>
    </source>
</reference>